<evidence type="ECO:0000250" key="1">
    <source>
        <dbReference type="UniProtKB" id="P02818"/>
    </source>
</evidence>
<evidence type="ECO:0000250" key="2">
    <source>
        <dbReference type="UniProtKB" id="P02819"/>
    </source>
</evidence>
<evidence type="ECO:0000250" key="3">
    <source>
        <dbReference type="UniProtKB" id="P02820"/>
    </source>
</evidence>
<evidence type="ECO:0000250" key="4">
    <source>
        <dbReference type="UniProtKB" id="P83489"/>
    </source>
</evidence>
<evidence type="ECO:0000250" key="5">
    <source>
        <dbReference type="UniProtKB" id="P86546"/>
    </source>
</evidence>
<evidence type="ECO:0000255" key="6">
    <source>
        <dbReference type="PROSITE-ProRule" id="PRU00463"/>
    </source>
</evidence>
<evidence type="ECO:0000269" key="7">
    <source>
    </source>
</evidence>
<evidence type="ECO:0000305" key="8"/>
<sequence>MRALTLLALLALAALCIAGQAGAKPSGAESSKGAAFVSKQEGSEVVKRPRRYLYQWLGAPVPYPDPLEPRREVCELNPDCDELADHIGFQEAYRRFYGPV</sequence>
<protein>
    <recommendedName>
        <fullName>Osteocalcin</fullName>
    </recommendedName>
    <alternativeName>
        <fullName>Bone Gla protein</fullName>
        <shortName>BGP</shortName>
    </alternativeName>
    <alternativeName>
        <fullName>Gamma-carboxyglutamic acid-containing protein</fullName>
    </alternativeName>
</protein>
<accession>P84349</accession>
<accession>A1YEW2</accession>
<gene>
    <name evidence="2" type="primary">BGLAP</name>
</gene>
<proteinExistence type="evidence at protein level"/>
<name>OSTCN_GORGO</name>
<dbReference type="EMBL" id="DQ976476">
    <property type="protein sequence ID" value="ABM46680.1"/>
    <property type="molecule type" value="Genomic_DNA"/>
</dbReference>
<dbReference type="RefSeq" id="XP_004027004.1">
    <property type="nucleotide sequence ID" value="XM_004026955.5"/>
</dbReference>
<dbReference type="SMR" id="P84349"/>
<dbReference type="FunCoup" id="P84349">
    <property type="interactions" value="105"/>
</dbReference>
<dbReference type="STRING" id="9593.ENSGGOP00000020872"/>
<dbReference type="Ensembl" id="ENSGGOT00000028415.2">
    <property type="protein sequence ID" value="ENSGGOP00000020872.1"/>
    <property type="gene ID" value="ENSGGOG00000010916.3"/>
</dbReference>
<dbReference type="GeneID" id="109023066"/>
<dbReference type="KEGG" id="ggo:109023066"/>
<dbReference type="CTD" id="632"/>
<dbReference type="GeneTree" id="ENSGT00410000026290"/>
<dbReference type="HOGENOM" id="CLU_160110_0_0_1"/>
<dbReference type="InParanoid" id="P84349"/>
<dbReference type="OMA" id="MDTEGII"/>
<dbReference type="OrthoDB" id="8079at9604"/>
<dbReference type="Proteomes" id="UP000001519">
    <property type="component" value="Chromosome 1"/>
</dbReference>
<dbReference type="Bgee" id="ENSGGOG00000010916">
    <property type="expression patterns" value="Expressed in heart and 5 other cell types or tissues"/>
</dbReference>
<dbReference type="GO" id="GO:0005737">
    <property type="term" value="C:cytoplasm"/>
    <property type="evidence" value="ECO:0000250"/>
    <property type="project" value="UniProtKB"/>
</dbReference>
<dbReference type="GO" id="GO:0005576">
    <property type="term" value="C:extracellular region"/>
    <property type="evidence" value="ECO:0000318"/>
    <property type="project" value="GO_Central"/>
</dbReference>
<dbReference type="GO" id="GO:0005509">
    <property type="term" value="F:calcium ion binding"/>
    <property type="evidence" value="ECO:0007669"/>
    <property type="project" value="InterPro"/>
</dbReference>
<dbReference type="GO" id="GO:0005179">
    <property type="term" value="F:hormone activity"/>
    <property type="evidence" value="ECO:0000250"/>
    <property type="project" value="UniProtKB"/>
</dbReference>
<dbReference type="GO" id="GO:0046848">
    <property type="term" value="F:hydroxyapatite binding"/>
    <property type="evidence" value="ECO:0000318"/>
    <property type="project" value="GO_Central"/>
</dbReference>
<dbReference type="GO" id="GO:0008147">
    <property type="term" value="F:structural constituent of bone"/>
    <property type="evidence" value="ECO:0000250"/>
    <property type="project" value="UniProtKB"/>
</dbReference>
<dbReference type="GO" id="GO:0031214">
    <property type="term" value="P:biomineral tissue development"/>
    <property type="evidence" value="ECO:0007669"/>
    <property type="project" value="UniProtKB-KW"/>
</dbReference>
<dbReference type="GO" id="GO:0060348">
    <property type="term" value="P:bone development"/>
    <property type="evidence" value="ECO:0000318"/>
    <property type="project" value="GO_Central"/>
</dbReference>
<dbReference type="GO" id="GO:0007420">
    <property type="term" value="P:brain development"/>
    <property type="evidence" value="ECO:0000250"/>
    <property type="project" value="UniProtKB"/>
</dbReference>
<dbReference type="GO" id="GO:0032869">
    <property type="term" value="P:cellular response to insulin stimulus"/>
    <property type="evidence" value="ECO:0000250"/>
    <property type="project" value="UniProtKB"/>
</dbReference>
<dbReference type="GO" id="GO:0050890">
    <property type="term" value="P:cognition"/>
    <property type="evidence" value="ECO:0000250"/>
    <property type="project" value="UniProtKB"/>
</dbReference>
<dbReference type="GO" id="GO:0042593">
    <property type="term" value="P:glucose homeostasis"/>
    <property type="evidence" value="ECO:0000250"/>
    <property type="project" value="UniProtKB"/>
</dbReference>
<dbReference type="GO" id="GO:0007611">
    <property type="term" value="P:learning or memory"/>
    <property type="evidence" value="ECO:0000250"/>
    <property type="project" value="UniProtKB"/>
</dbReference>
<dbReference type="GO" id="GO:1903011">
    <property type="term" value="P:negative regulation of bone development"/>
    <property type="evidence" value="ECO:0000250"/>
    <property type="project" value="UniProtKB"/>
</dbReference>
<dbReference type="GO" id="GO:0001649">
    <property type="term" value="P:osteoblast differentiation"/>
    <property type="evidence" value="ECO:0000318"/>
    <property type="project" value="GO_Central"/>
</dbReference>
<dbReference type="GO" id="GO:0001956">
    <property type="term" value="P:positive regulation of neurotransmitter secretion"/>
    <property type="evidence" value="ECO:0000250"/>
    <property type="project" value="UniProtKB"/>
</dbReference>
<dbReference type="GO" id="GO:0030500">
    <property type="term" value="P:regulation of bone mineralization"/>
    <property type="evidence" value="ECO:0007669"/>
    <property type="project" value="InterPro"/>
</dbReference>
<dbReference type="GO" id="GO:1900076">
    <property type="term" value="P:regulation of cellular response to insulin stimulus"/>
    <property type="evidence" value="ECO:0007669"/>
    <property type="project" value="InterPro"/>
</dbReference>
<dbReference type="GO" id="GO:2000224">
    <property type="term" value="P:regulation of testosterone biosynthetic process"/>
    <property type="evidence" value="ECO:0000250"/>
    <property type="project" value="UniProtKB"/>
</dbReference>
<dbReference type="GO" id="GO:0033280">
    <property type="term" value="P:response to vitamin D"/>
    <property type="evidence" value="ECO:0007669"/>
    <property type="project" value="Ensembl"/>
</dbReference>
<dbReference type="GO" id="GO:0032571">
    <property type="term" value="P:response to vitamin K"/>
    <property type="evidence" value="ECO:0007669"/>
    <property type="project" value="InterPro"/>
</dbReference>
<dbReference type="GO" id="GO:0044342">
    <property type="term" value="P:type B pancreatic cell proliferation"/>
    <property type="evidence" value="ECO:0000250"/>
    <property type="project" value="UniProtKB"/>
</dbReference>
<dbReference type="InterPro" id="IPR035972">
    <property type="entry name" value="GLA-like_dom_SF"/>
</dbReference>
<dbReference type="InterPro" id="IPR000294">
    <property type="entry name" value="GLA_domain"/>
</dbReference>
<dbReference type="InterPro" id="IPR039176">
    <property type="entry name" value="Osteocalcin"/>
</dbReference>
<dbReference type="InterPro" id="IPR002384">
    <property type="entry name" value="Osteocalcin/MGP"/>
</dbReference>
<dbReference type="PANTHER" id="PTHR14235">
    <property type="entry name" value="OSTEOCALCIN"/>
    <property type="match status" value="1"/>
</dbReference>
<dbReference type="PANTHER" id="PTHR14235:SF0">
    <property type="entry name" value="OSTEOCALCIN"/>
    <property type="match status" value="1"/>
</dbReference>
<dbReference type="PRINTS" id="PR00002">
    <property type="entry name" value="GLABONE"/>
</dbReference>
<dbReference type="SMART" id="SM00069">
    <property type="entry name" value="GLA"/>
    <property type="match status" value="1"/>
</dbReference>
<dbReference type="SUPFAM" id="SSF57630">
    <property type="entry name" value="GLA-domain"/>
    <property type="match status" value="1"/>
</dbReference>
<dbReference type="PROSITE" id="PS00011">
    <property type="entry name" value="GLA_1"/>
    <property type="match status" value="1"/>
</dbReference>
<dbReference type="PROSITE" id="PS50998">
    <property type="entry name" value="GLA_2"/>
    <property type="match status" value="1"/>
</dbReference>
<comment type="function">
    <text evidence="5">The carboxylated form is one of the main organic components of the bone matrix, which constitutes 1-2% of the total bone protein: it acts as a negative regulator of bone formation and is required to limit bone formation without impairing bone resorption or mineralization. The carboxylated form binds strongly to apatite and calcium.</text>
</comment>
<comment type="function">
    <text evidence="5">The uncarboxylated form acts as a hormone secreted by osteoblasts, which regulates different cellular processes, such as energy metabolism, male fertility and brain development. Regulates of energy metabolism by acting as a hormone favoring pancreatic beta-cell proliferation, insulin secretion and sensitivity and energy expenditure. Uncarboxylated osteocalcin hormone also promotes testosterone production in the testes: acts as a ligand for G protein-coupled receptor GPRC6A at the surface of Leydig cells, initiating a signaling response that promotes the expression of enzymes required for testosterone synthesis in a CREB-dependent manner. Also acts as a regulator of brain development: osteocalcin hormone crosses the blood-brain barrier and acts as a ligand for GPR158 on neurons, initiating a signaling response that prevents neuronal apoptosis in the hippocampus, favors the synthesis of all monoamine neurotransmitters and inhibits that of gamma-aminobutyric acid (GABA). Osteocalcin also crosses the placenta during pregnancy and maternal osteocalcin is required for fetal brain development.</text>
</comment>
<comment type="subcellular location">
    <subcellularLocation>
        <location evidence="7">Secreted</location>
    </subcellularLocation>
</comment>
<comment type="PTM">
    <text evidence="5 6">Gamma-carboxyglutamate residues are formed by vitamin K dependent carboxylation by GGCX. These residues are essential for the binding of calcium (By similarity). Decarboxylation promotes the hormone activity (By similarity).</text>
</comment>
<comment type="similarity">
    <text evidence="8">Belongs to the osteocalcin/matrix Gla protein family.</text>
</comment>
<keyword id="KW-0091">Biomineralization</keyword>
<keyword id="KW-0106">Calcium</keyword>
<keyword id="KW-0165">Cleavage on pair of basic residues</keyword>
<keyword id="KW-0903">Direct protein sequencing</keyword>
<keyword id="KW-1015">Disulfide bond</keyword>
<keyword id="KW-0301">Gamma-carboxyglutamic acid</keyword>
<keyword id="KW-0372">Hormone</keyword>
<keyword id="KW-0379">Hydroxylation</keyword>
<keyword id="KW-0479">Metal-binding</keyword>
<keyword id="KW-1185">Reference proteome</keyword>
<keyword id="KW-0964">Secreted</keyword>
<keyword id="KW-0732">Signal</keyword>
<organism>
    <name type="scientific">Gorilla gorilla gorilla</name>
    <name type="common">Western lowland gorilla</name>
    <dbReference type="NCBI Taxonomy" id="9595"/>
    <lineage>
        <taxon>Eukaryota</taxon>
        <taxon>Metazoa</taxon>
        <taxon>Chordata</taxon>
        <taxon>Craniata</taxon>
        <taxon>Vertebrata</taxon>
        <taxon>Euteleostomi</taxon>
        <taxon>Mammalia</taxon>
        <taxon>Eutheria</taxon>
        <taxon>Euarchontoglires</taxon>
        <taxon>Primates</taxon>
        <taxon>Haplorrhini</taxon>
        <taxon>Catarrhini</taxon>
        <taxon>Hominidae</taxon>
        <taxon>Gorilla</taxon>
    </lineage>
</organism>
<feature type="signal peptide" evidence="8">
    <location>
        <begin position="1"/>
        <end position="23"/>
    </location>
</feature>
<feature type="propeptide" id="PRO_0000285411" evidence="7">
    <location>
        <begin position="24"/>
        <end position="51"/>
    </location>
</feature>
<feature type="chain" id="PRO_0000148898" description="Osteocalcin">
    <location>
        <begin position="52"/>
        <end position="100"/>
    </location>
</feature>
<feature type="domain" description="Gla" evidence="6">
    <location>
        <begin position="52"/>
        <end position="98"/>
    </location>
</feature>
<feature type="binding site" evidence="3">
    <location>
        <position position="68"/>
    </location>
    <ligand>
        <name>Ca(2+)</name>
        <dbReference type="ChEBI" id="CHEBI:29108"/>
        <label>1</label>
    </ligand>
</feature>
<feature type="binding site" evidence="3">
    <location>
        <position position="72"/>
    </location>
    <ligand>
        <name>Ca(2+)</name>
        <dbReference type="ChEBI" id="CHEBI:29108"/>
        <label>2</label>
    </ligand>
</feature>
<feature type="binding site" evidence="3">
    <location>
        <position position="75"/>
    </location>
    <ligand>
        <name>Ca(2+)</name>
        <dbReference type="ChEBI" id="CHEBI:29108"/>
        <label>2</label>
    </ligand>
</feature>
<feature type="binding site" evidence="3">
    <location>
        <position position="75"/>
    </location>
    <ligand>
        <name>Ca(2+)</name>
        <dbReference type="ChEBI" id="CHEBI:29108"/>
        <label>3</label>
    </ligand>
</feature>
<feature type="binding site" evidence="3">
    <location>
        <position position="81"/>
    </location>
    <ligand>
        <name>Ca(2+)</name>
        <dbReference type="ChEBI" id="CHEBI:29108"/>
        <label>3</label>
    </ligand>
</feature>
<feature type="modified residue" description="4-hydroxyproline; partial" evidence="7">
    <location>
        <position position="60"/>
    </location>
</feature>
<feature type="modified residue" description="4-carboxyglutamate" evidence="1 6">
    <location>
        <position position="68"/>
    </location>
</feature>
<feature type="modified residue" description="4-carboxyglutamate" evidence="4 6">
    <location>
        <position position="72"/>
    </location>
</feature>
<feature type="modified residue" description="4-carboxyglutamate" evidence="4 6">
    <location>
        <position position="75"/>
    </location>
</feature>
<feature type="disulfide bond" evidence="6">
    <location>
        <begin position="74"/>
        <end position="80"/>
    </location>
</feature>
<reference key="1">
    <citation type="submission" date="2006-08" db="EMBL/GenBank/DDBJ databases">
        <title>Positive selection in transcription factor genes on the human lineage.</title>
        <authorList>
            <person name="Nickel G.C."/>
            <person name="Tefft D.L."/>
            <person name="Trevarthen K."/>
            <person name="Funt J."/>
            <person name="Adams M.D."/>
        </authorList>
    </citation>
    <scope>NUCLEOTIDE SEQUENCE [GENOMIC DNA]</scope>
</reference>
<reference evidence="8" key="2">
    <citation type="journal article" date="2005" name="Proc. Natl. Acad. Sci. U.S.A.">
        <title>Osteocalcin protein sequences of Neanderthals and modern primates.</title>
        <authorList>
            <person name="Nielsen-Marsh C.M."/>
            <person name="Richards M.P."/>
            <person name="Hauschka P.V."/>
            <person name="Thomas-Oates J.E."/>
            <person name="Trinkaus E."/>
            <person name="Pettit P.B."/>
            <person name="Karavanic I."/>
            <person name="Poinar H."/>
            <person name="Collins M.J."/>
        </authorList>
    </citation>
    <scope>PROTEIN SEQUENCE OF 52-100</scope>
    <scope>HYDROXYLATION AT PRO-60</scope>
    <source>
        <tissue evidence="7">Bone</tissue>
    </source>
</reference>